<dbReference type="EC" id="1.14.12.-"/>
<dbReference type="EMBL" id="X78823">
    <property type="protein sequence ID" value="CAA55400.1"/>
    <property type="molecule type" value="Genomic_DNA"/>
</dbReference>
<dbReference type="PIR" id="S44171">
    <property type="entry name" value="S44171"/>
</dbReference>
<dbReference type="SMR" id="Q52185"/>
<dbReference type="UniPathway" id="UPA00730"/>
<dbReference type="GO" id="GO:0051537">
    <property type="term" value="F:2 iron, 2 sulfur cluster binding"/>
    <property type="evidence" value="ECO:0007669"/>
    <property type="project" value="UniProtKB-KW"/>
</dbReference>
<dbReference type="GO" id="GO:0051213">
    <property type="term" value="F:dioxygenase activity"/>
    <property type="evidence" value="ECO:0007669"/>
    <property type="project" value="UniProtKB-KW"/>
</dbReference>
<dbReference type="GO" id="GO:0005506">
    <property type="term" value="F:iron ion binding"/>
    <property type="evidence" value="ECO:0007669"/>
    <property type="project" value="InterPro"/>
</dbReference>
<dbReference type="GO" id="GO:0009056">
    <property type="term" value="P:catabolic process"/>
    <property type="evidence" value="ECO:0007669"/>
    <property type="project" value="UniProtKB-KW"/>
</dbReference>
<dbReference type="CDD" id="cd03479">
    <property type="entry name" value="Rieske_RO_Alpha_PhDO_like"/>
    <property type="match status" value="1"/>
</dbReference>
<dbReference type="Gene3D" id="2.102.10.10">
    <property type="entry name" value="Rieske [2Fe-2S] iron-sulphur domain"/>
    <property type="match status" value="1"/>
</dbReference>
<dbReference type="InterPro" id="IPR050584">
    <property type="entry name" value="Cholesterol_7-desaturase"/>
</dbReference>
<dbReference type="InterPro" id="IPR017941">
    <property type="entry name" value="Rieske_2Fe-2S"/>
</dbReference>
<dbReference type="InterPro" id="IPR036922">
    <property type="entry name" value="Rieske_2Fe-2S_sf"/>
</dbReference>
<dbReference type="InterPro" id="IPR015881">
    <property type="entry name" value="Ring-hydroxy_dOase_2Fe2S_BS"/>
</dbReference>
<dbReference type="PANTHER" id="PTHR21266:SF59">
    <property type="entry name" value="BLR4922 PROTEIN"/>
    <property type="match status" value="1"/>
</dbReference>
<dbReference type="PANTHER" id="PTHR21266">
    <property type="entry name" value="IRON-SULFUR DOMAIN CONTAINING PROTEIN"/>
    <property type="match status" value="1"/>
</dbReference>
<dbReference type="Pfam" id="PF00355">
    <property type="entry name" value="Rieske"/>
    <property type="match status" value="1"/>
</dbReference>
<dbReference type="SUPFAM" id="SSF55961">
    <property type="entry name" value="Bet v1-like"/>
    <property type="match status" value="1"/>
</dbReference>
<dbReference type="SUPFAM" id="SSF50022">
    <property type="entry name" value="ISP domain"/>
    <property type="match status" value="1"/>
</dbReference>
<dbReference type="PROSITE" id="PS51296">
    <property type="entry name" value="RIESKE"/>
    <property type="match status" value="1"/>
</dbReference>
<dbReference type="PROSITE" id="PS00570">
    <property type="entry name" value="RING_HYDROXYL_ALPHA"/>
    <property type="match status" value="1"/>
</dbReference>
<reference key="1">
    <citation type="journal article" date="1995" name="Arch. Microbiol.">
        <title>Cloning, nucleotide sequence, and expression of the gene encoding a novel dioxygenase involved in metabolism of carboxydiphenyl ethers in Pseudomonas pseudoalcaligenes POB310.</title>
        <authorList>
            <person name="Dehmel U."/>
            <person name="Engesser K.-H."/>
            <person name="Timmis K.N."/>
            <person name="Dwyer D.F."/>
        </authorList>
    </citation>
    <scope>NUCLEOTIDE SEQUENCE [GENOMIC DNA]</scope>
    <source>
        <strain>POB310</strain>
    </source>
</reference>
<accession>Q52185</accession>
<comment type="function">
    <text>Degrades exclusively diarylether compounds having carboxyl groups in the 3- or 4-position. Yields a hemiacetal that spontaneously hydrolyzes to phenol and protocatechuate.</text>
</comment>
<comment type="cofactor">
    <cofactor evidence="3">
        <name>[2Fe-2S] cluster</name>
        <dbReference type="ChEBI" id="CHEBI:190135"/>
    </cofactor>
    <text evidence="3">Binds 1 [2Fe-2S] cluster.</text>
</comment>
<comment type="cofactor">
    <cofactor evidence="3">
        <name>Fe cation</name>
        <dbReference type="ChEBI" id="CHEBI:24875"/>
    </cofactor>
    <text evidence="3">Binds 1 Fe cation.</text>
</comment>
<comment type="pathway">
    <text>Aromatic compound metabolism; carboxydiphenyl ether degradation.</text>
</comment>
<comment type="subunit">
    <text>This dioxygenase system consists of two proteins: the alpha subunit (PobA) and a subunit (PobB) that acts as a ferredoxin and a ferredoxin reductase.</text>
</comment>
<comment type="induction">
    <text>By 3- or 4-carboxydiphenyl ether and by phenol.</text>
</comment>
<comment type="similarity">
    <text evidence="3">Belongs to the bacterial ring-hydroxylating dioxygenase alpha subunit family.</text>
</comment>
<geneLocation type="plasmid">
    <name>pPOB</name>
</geneLocation>
<keyword id="KW-0001">2Fe-2S</keyword>
<keyword id="KW-0058">Aromatic hydrocarbons catabolism</keyword>
<keyword id="KW-0223">Dioxygenase</keyword>
<keyword id="KW-0408">Iron</keyword>
<keyword id="KW-0411">Iron-sulfur</keyword>
<keyword id="KW-0479">Metal-binding</keyword>
<keyword id="KW-0520">NAD</keyword>
<keyword id="KW-0560">Oxidoreductase</keyword>
<keyword id="KW-0614">Plasmid</keyword>
<sequence length="409" mass="46259">MSKTIPIVDAQHAGSAYQHVPGHPDPQLSAVAKGTPTGEYLRRYWQPVALSADVTDRPQMVRILGEDLVLFRDKAGRPGLLYPRCMHRGTSLYYGHVEEAGIRCCYHGWLFAVDGTCLNQPCEPEGGLRREAARQPWYPVEERYGLVFAYMGPPEKKPVLPRYDILEDLEEGEFIEVISGGFVSYADHVEDPNVPYHWLQNWENIMDPYHVYILHSTFSGIQFAENFKILPRVDFEAVDGGVIYHAWRDLEDGRQLERINSALFPNISAIPMIDLSPGQGRWIGWHVAVDDQHYRGFFAARTRQPGNFAPIKMHNGKSWTELSEQEKQDFPGDFEAQFGQGRVTLHGEEHLATSDHGIALLRRQMKQQIAIVQQGGDPAGVHFNEADALVRIRSGNFYTTSDKTETAAD</sequence>
<proteinExistence type="evidence at transcript level"/>
<evidence type="ECO:0000250" key="1"/>
<evidence type="ECO:0000255" key="2">
    <source>
        <dbReference type="PROSITE-ProRule" id="PRU00628"/>
    </source>
</evidence>
<evidence type="ECO:0000305" key="3"/>
<name>POBA_ECTOL</name>
<gene>
    <name type="primary">pobA</name>
</gene>
<organism>
    <name type="scientific">Ectopseudomonas oleovorans</name>
    <name type="common">Pseudomonas oleovorans</name>
    <dbReference type="NCBI Taxonomy" id="301"/>
    <lineage>
        <taxon>Bacteria</taxon>
        <taxon>Pseudomonadati</taxon>
        <taxon>Pseudomonadota</taxon>
        <taxon>Gammaproteobacteria</taxon>
        <taxon>Pseudomonadales</taxon>
        <taxon>Pseudomonadaceae</taxon>
        <taxon>Ectopseudomonas</taxon>
    </lineage>
</organism>
<feature type="chain" id="PRO_0000085057" description="Phenoxybenzoate dioxygenase subunit alpha">
    <location>
        <begin position="1"/>
        <end position="409"/>
    </location>
</feature>
<feature type="domain" description="Rieske" evidence="2">
    <location>
        <begin position="45"/>
        <end position="149"/>
    </location>
</feature>
<feature type="binding site" evidence="2">
    <location>
        <position position="85"/>
    </location>
    <ligand>
        <name>[2Fe-2S] cluster</name>
        <dbReference type="ChEBI" id="CHEBI:190135"/>
    </ligand>
</feature>
<feature type="binding site" evidence="2">
    <location>
        <position position="87"/>
    </location>
    <ligand>
        <name>[2Fe-2S] cluster</name>
        <dbReference type="ChEBI" id="CHEBI:190135"/>
    </ligand>
</feature>
<feature type="binding site" evidence="2">
    <location>
        <position position="104"/>
    </location>
    <ligand>
        <name>[2Fe-2S] cluster</name>
        <dbReference type="ChEBI" id="CHEBI:190135"/>
    </ligand>
</feature>
<feature type="binding site" evidence="2">
    <location>
        <position position="107"/>
    </location>
    <ligand>
        <name>[2Fe-2S] cluster</name>
        <dbReference type="ChEBI" id="CHEBI:190135"/>
    </ligand>
</feature>
<feature type="binding site" evidence="1">
    <location>
        <position position="210"/>
    </location>
    <ligand>
        <name>Fe cation</name>
        <dbReference type="ChEBI" id="CHEBI:24875"/>
    </ligand>
</feature>
<feature type="binding site" evidence="1">
    <location>
        <position position="215"/>
    </location>
    <ligand>
        <name>Fe cation</name>
        <dbReference type="ChEBI" id="CHEBI:24875"/>
    </ligand>
</feature>
<protein>
    <recommendedName>
        <fullName>Phenoxybenzoate dioxygenase subunit alpha</fullName>
        <ecNumber>1.14.12.-</ecNumber>
    </recommendedName>
    <alternativeName>
        <fullName>4-carboxydiphenyl ether;phenoxybenzoate dioxygenase</fullName>
    </alternativeName>
</protein>